<dbReference type="EMBL" id="AE016814">
    <property type="protein sequence ID" value="AAS50396.2"/>
    <property type="molecule type" value="Genomic_DNA"/>
</dbReference>
<dbReference type="RefSeq" id="NP_982572.2">
    <property type="nucleotide sequence ID" value="NM_207925.2"/>
</dbReference>
<dbReference type="SMR" id="Q75EP8"/>
<dbReference type="FunCoup" id="Q75EP8">
    <property type="interactions" value="1313"/>
</dbReference>
<dbReference type="STRING" id="284811.Q75EP8"/>
<dbReference type="EnsemblFungi" id="AAS50396">
    <property type="protein sequence ID" value="AAS50396"/>
    <property type="gene ID" value="AGOS_AAR031W"/>
</dbReference>
<dbReference type="GeneID" id="4618537"/>
<dbReference type="KEGG" id="ago:AGOS_AAR031W"/>
<dbReference type="eggNOG" id="KOG1856">
    <property type="taxonomic scope" value="Eukaryota"/>
</dbReference>
<dbReference type="HOGENOM" id="CLU_001680_0_1_1"/>
<dbReference type="InParanoid" id="Q75EP8"/>
<dbReference type="OMA" id="GYFYLCF"/>
<dbReference type="OrthoDB" id="995477at2759"/>
<dbReference type="Proteomes" id="UP000000591">
    <property type="component" value="Chromosome I"/>
</dbReference>
<dbReference type="GO" id="GO:0000791">
    <property type="term" value="C:euchromatin"/>
    <property type="evidence" value="ECO:0007669"/>
    <property type="project" value="EnsemblFungi"/>
</dbReference>
<dbReference type="GO" id="GO:0005721">
    <property type="term" value="C:pericentric heterochromatin"/>
    <property type="evidence" value="ECO:0007669"/>
    <property type="project" value="EnsemblFungi"/>
</dbReference>
<dbReference type="GO" id="GO:0008023">
    <property type="term" value="C:transcription elongation factor complex"/>
    <property type="evidence" value="ECO:0000318"/>
    <property type="project" value="GO_Central"/>
</dbReference>
<dbReference type="GO" id="GO:0003677">
    <property type="term" value="F:DNA binding"/>
    <property type="evidence" value="ECO:0007669"/>
    <property type="project" value="InterPro"/>
</dbReference>
<dbReference type="GO" id="GO:0042393">
    <property type="term" value="F:histone binding"/>
    <property type="evidence" value="ECO:0000318"/>
    <property type="project" value="GO_Central"/>
</dbReference>
<dbReference type="GO" id="GO:0031491">
    <property type="term" value="F:nucleosome binding"/>
    <property type="evidence" value="ECO:0000318"/>
    <property type="project" value="GO_Central"/>
</dbReference>
<dbReference type="GO" id="GO:0001073">
    <property type="term" value="F:transcription antitermination factor activity, DNA binding"/>
    <property type="evidence" value="ECO:0007669"/>
    <property type="project" value="EnsemblFungi"/>
</dbReference>
<dbReference type="GO" id="GO:0033554">
    <property type="term" value="P:cellular response to stress"/>
    <property type="evidence" value="ECO:0007669"/>
    <property type="project" value="EnsemblFungi"/>
</dbReference>
<dbReference type="GO" id="GO:0000082">
    <property type="term" value="P:G1/S transition of mitotic cell cycle"/>
    <property type="evidence" value="ECO:0007669"/>
    <property type="project" value="EnsemblFungi"/>
</dbReference>
<dbReference type="GO" id="GO:0000122">
    <property type="term" value="P:negative regulation of transcription by RNA polymerase II"/>
    <property type="evidence" value="ECO:0007669"/>
    <property type="project" value="EnsemblFungi"/>
</dbReference>
<dbReference type="GO" id="GO:0006334">
    <property type="term" value="P:nucleosome assembly"/>
    <property type="evidence" value="ECO:0007669"/>
    <property type="project" value="EnsemblFungi"/>
</dbReference>
<dbReference type="GO" id="GO:0034728">
    <property type="term" value="P:nucleosome organization"/>
    <property type="evidence" value="ECO:0000318"/>
    <property type="project" value="GO_Central"/>
</dbReference>
<dbReference type="GO" id="GO:0016973">
    <property type="term" value="P:poly(A)+ mRNA export from nucleus"/>
    <property type="evidence" value="ECO:0007669"/>
    <property type="project" value="EnsemblFungi"/>
</dbReference>
<dbReference type="GO" id="GO:0032968">
    <property type="term" value="P:positive regulation of transcription elongation by RNA polymerase II"/>
    <property type="evidence" value="ECO:0007669"/>
    <property type="project" value="EnsemblFungi"/>
</dbReference>
<dbReference type="GO" id="GO:0031440">
    <property type="term" value="P:regulation of mRNA 3'-end processing"/>
    <property type="evidence" value="ECO:0007669"/>
    <property type="project" value="EnsemblFungi"/>
</dbReference>
<dbReference type="GO" id="GO:0006368">
    <property type="term" value="P:transcription elongation by RNA polymerase II"/>
    <property type="evidence" value="ECO:0000318"/>
    <property type="project" value="GO_Central"/>
</dbReference>
<dbReference type="GO" id="GO:0140673">
    <property type="term" value="P:transcription elongation-coupled chromatin remodeling"/>
    <property type="evidence" value="ECO:0007669"/>
    <property type="project" value="EnsemblFungi"/>
</dbReference>
<dbReference type="CDD" id="cd09928">
    <property type="entry name" value="SH2_Cterm_SPT6_like"/>
    <property type="match status" value="1"/>
</dbReference>
<dbReference type="CDD" id="cd09918">
    <property type="entry name" value="SH2_Nterm_SPT6_like"/>
    <property type="match status" value="1"/>
</dbReference>
<dbReference type="FunFam" id="3.30.505.10:FF:000065">
    <property type="entry name" value="Transcription elongation factor SPT6"/>
    <property type="match status" value="1"/>
</dbReference>
<dbReference type="FunFam" id="1.10.10.2740:FF:000002">
    <property type="entry name" value="Transcription elongation factor Spt6"/>
    <property type="match status" value="1"/>
</dbReference>
<dbReference type="FunFam" id="1.10.10.650:FF:000007">
    <property type="entry name" value="Transcription elongation factor Spt6"/>
    <property type="match status" value="1"/>
</dbReference>
<dbReference type="FunFam" id="3.30.505.10:FF:000056">
    <property type="entry name" value="Transcription elongation factor Spt6"/>
    <property type="match status" value="1"/>
</dbReference>
<dbReference type="FunFam" id="1.10.150.850:FF:000001">
    <property type="entry name" value="Transcription elongation factor spt6"/>
    <property type="match status" value="1"/>
</dbReference>
<dbReference type="Gene3D" id="1.10.10.650">
    <property type="entry name" value="RuvA domain 2-like"/>
    <property type="match status" value="1"/>
</dbReference>
<dbReference type="Gene3D" id="3.30.505.10">
    <property type="entry name" value="SH2 domain"/>
    <property type="match status" value="2"/>
</dbReference>
<dbReference type="Gene3D" id="1.10.10.2740">
    <property type="entry name" value="Spt6, Death-like domain"/>
    <property type="match status" value="1"/>
</dbReference>
<dbReference type="Gene3D" id="1.10.150.850">
    <property type="entry name" value="Spt6, helix-hairpin-helix domain"/>
    <property type="match status" value="1"/>
</dbReference>
<dbReference type="Gene3D" id="1.10.3500.10">
    <property type="entry name" value="Tex N-terminal region-like"/>
    <property type="match status" value="2"/>
</dbReference>
<dbReference type="Gene3D" id="3.30.420.140">
    <property type="entry name" value="YqgF/RNase H-like domain"/>
    <property type="match status" value="1"/>
</dbReference>
<dbReference type="InterPro" id="IPR012337">
    <property type="entry name" value="RNaseH-like_sf"/>
</dbReference>
<dbReference type="InterPro" id="IPR010994">
    <property type="entry name" value="RuvA_2-like"/>
</dbReference>
<dbReference type="InterPro" id="IPR000980">
    <property type="entry name" value="SH2"/>
</dbReference>
<dbReference type="InterPro" id="IPR036860">
    <property type="entry name" value="SH2_dom_sf"/>
</dbReference>
<dbReference type="InterPro" id="IPR049540">
    <property type="entry name" value="Spt6-like_S1"/>
</dbReference>
<dbReference type="InterPro" id="IPR028083">
    <property type="entry name" value="Spt6_acidic_N_dom"/>
</dbReference>
<dbReference type="InterPro" id="IPR042066">
    <property type="entry name" value="Spt6_death-like"/>
</dbReference>
<dbReference type="InterPro" id="IPR032706">
    <property type="entry name" value="Spt6_HHH"/>
</dbReference>
<dbReference type="InterPro" id="IPR028088">
    <property type="entry name" value="Spt6_HTH_DNA-bd_dom"/>
</dbReference>
<dbReference type="InterPro" id="IPR035420">
    <property type="entry name" value="Spt6_SH2"/>
</dbReference>
<dbReference type="InterPro" id="IPR035018">
    <property type="entry name" value="Spt6_SH2_C"/>
</dbReference>
<dbReference type="InterPro" id="IPR035019">
    <property type="entry name" value="Spt6_SH2_N"/>
</dbReference>
<dbReference type="InterPro" id="IPR028231">
    <property type="entry name" value="Spt6_YqgF"/>
</dbReference>
<dbReference type="InterPro" id="IPR055179">
    <property type="entry name" value="Tex-like_central_region"/>
</dbReference>
<dbReference type="InterPro" id="IPR023323">
    <property type="entry name" value="Tex-like_dom_sf"/>
</dbReference>
<dbReference type="InterPro" id="IPR023319">
    <property type="entry name" value="Tex-like_HTH_dom_sf"/>
</dbReference>
<dbReference type="InterPro" id="IPR017072">
    <property type="entry name" value="TF_Spt6"/>
</dbReference>
<dbReference type="InterPro" id="IPR006641">
    <property type="entry name" value="YqgF/RNaseH-like_dom"/>
</dbReference>
<dbReference type="InterPro" id="IPR037027">
    <property type="entry name" value="YqgF/RNaseH-like_dom_sf"/>
</dbReference>
<dbReference type="PANTHER" id="PTHR10145">
    <property type="entry name" value="TRANSCRIPTION ELONGATION FACTOR SPT6"/>
    <property type="match status" value="1"/>
</dbReference>
<dbReference type="PANTHER" id="PTHR10145:SF6">
    <property type="entry name" value="TRANSCRIPTION ELONGATION FACTOR SPT6"/>
    <property type="match status" value="1"/>
</dbReference>
<dbReference type="Pfam" id="PF14635">
    <property type="entry name" value="HHH_7"/>
    <property type="match status" value="1"/>
</dbReference>
<dbReference type="Pfam" id="PF14641">
    <property type="entry name" value="HTH_44"/>
    <property type="match status" value="1"/>
</dbReference>
<dbReference type="Pfam" id="PF14633">
    <property type="entry name" value="SH2_2"/>
    <property type="match status" value="1"/>
</dbReference>
<dbReference type="Pfam" id="PF14632">
    <property type="entry name" value="SPT6_acidic"/>
    <property type="match status" value="1"/>
</dbReference>
<dbReference type="Pfam" id="PF21710">
    <property type="entry name" value="Spt6_S1"/>
    <property type="match status" value="1"/>
</dbReference>
<dbReference type="Pfam" id="PF22706">
    <property type="entry name" value="Tex_central_region"/>
    <property type="match status" value="1"/>
</dbReference>
<dbReference type="Pfam" id="PF14639">
    <property type="entry name" value="YqgF"/>
    <property type="match status" value="1"/>
</dbReference>
<dbReference type="PIRSF" id="PIRSF036947">
    <property type="entry name" value="Spt6"/>
    <property type="match status" value="1"/>
</dbReference>
<dbReference type="SMART" id="SM00252">
    <property type="entry name" value="SH2"/>
    <property type="match status" value="1"/>
</dbReference>
<dbReference type="SMART" id="SM00732">
    <property type="entry name" value="YqgFc"/>
    <property type="match status" value="1"/>
</dbReference>
<dbReference type="SUPFAM" id="SSF53098">
    <property type="entry name" value="Ribonuclease H-like"/>
    <property type="match status" value="1"/>
</dbReference>
<dbReference type="SUPFAM" id="SSF47781">
    <property type="entry name" value="RuvA domain 2-like"/>
    <property type="match status" value="1"/>
</dbReference>
<dbReference type="SUPFAM" id="SSF55550">
    <property type="entry name" value="SH2 domain"/>
    <property type="match status" value="1"/>
</dbReference>
<dbReference type="SUPFAM" id="SSF158832">
    <property type="entry name" value="Tex N-terminal region-like"/>
    <property type="match status" value="1"/>
</dbReference>
<dbReference type="PROSITE" id="PS50001">
    <property type="entry name" value="SH2"/>
    <property type="match status" value="1"/>
</dbReference>
<gene>
    <name type="primary">SPT6</name>
    <name type="ordered locus">AAR031W</name>
</gene>
<proteinExistence type="inferred from homology"/>
<reference key="1">
    <citation type="journal article" date="2004" name="Science">
        <title>The Ashbya gossypii genome as a tool for mapping the ancient Saccharomyces cerevisiae genome.</title>
        <authorList>
            <person name="Dietrich F.S."/>
            <person name="Voegeli S."/>
            <person name="Brachat S."/>
            <person name="Lerch A."/>
            <person name="Gates K."/>
            <person name="Steiner S."/>
            <person name="Mohr C."/>
            <person name="Poehlmann R."/>
            <person name="Luedi P."/>
            <person name="Choi S."/>
            <person name="Wing R.A."/>
            <person name="Flavier A."/>
            <person name="Gaffney T.D."/>
            <person name="Philippsen P."/>
        </authorList>
    </citation>
    <scope>NUCLEOTIDE SEQUENCE [LARGE SCALE GENOMIC DNA]</scope>
    <source>
        <strain>ATCC 10895 / CBS 109.51 / FGSC 9923 / NRRL Y-1056</strain>
    </source>
</reference>
<reference key="2">
    <citation type="journal article" date="2013" name="G3 (Bethesda)">
        <title>Genomes of Ashbya fungi isolated from insects reveal four mating-type loci, numerous translocations, lack of transposons, and distinct gene duplications.</title>
        <authorList>
            <person name="Dietrich F.S."/>
            <person name="Voegeli S."/>
            <person name="Kuo S."/>
            <person name="Philippsen P."/>
        </authorList>
    </citation>
    <scope>GENOME REANNOTATION</scope>
    <scope>SEQUENCE REVISION TO 262 AND 1302</scope>
    <source>
        <strain>ATCC 10895 / CBS 109.51 / FGSC 9923 / NRRL Y-1056</strain>
    </source>
</reference>
<name>SPT6_EREGS</name>
<accession>Q75EP8</accession>
<comment type="function">
    <text evidence="1">Histone H3-H4 chaperone that plays a role in maintenance of chromatin structure during RNA polymerase II transcription elongation thereby repressing transcription initiation from cryptic promoters. Mediates the reassembly of nucleosomes onto the promoters of at least a selected set of genes during repression; the nucleosome reassembly is essential for transcriptional repression. Essential for viability.</text>
</comment>
<comment type="subcellular location">
    <subcellularLocation>
        <location evidence="1">Nucleus</location>
    </subcellularLocation>
    <subcellularLocation>
        <location evidence="1">Chromosome</location>
    </subcellularLocation>
</comment>
<comment type="similarity">
    <text evidence="4">Belongs to the SPT6 family.</text>
</comment>
<organism>
    <name type="scientific">Eremothecium gossypii (strain ATCC 10895 / CBS 109.51 / FGSC 9923 / NRRL Y-1056)</name>
    <name type="common">Yeast</name>
    <name type="synonym">Ashbya gossypii</name>
    <dbReference type="NCBI Taxonomy" id="284811"/>
    <lineage>
        <taxon>Eukaryota</taxon>
        <taxon>Fungi</taxon>
        <taxon>Dikarya</taxon>
        <taxon>Ascomycota</taxon>
        <taxon>Saccharomycotina</taxon>
        <taxon>Saccharomycetes</taxon>
        <taxon>Saccharomycetales</taxon>
        <taxon>Saccharomycetaceae</taxon>
        <taxon>Eremothecium</taxon>
    </lineage>
</organism>
<sequence>MSSEGLASARELEERDLGATRDTEEIPSDEEEGEDVFDSSEEDEDLDEDEEEARKVKEGFIVSDDEEDDSSVKQRRRRKHKRRPRHEEDDGKLSEDDLDLLMENAGVKRTTRPETDATKGRFKRLKRAGSPDESEGQQDTDGRHENRLEDFFSEEEDEEHLGGTENRRLRTGGKDVLDELDDFIEEDEFSDEDEATRQQRRKLKEQRSKQSVQITGLSSDKIDEMYDIFGDGHDYDWALAVENEDDLENLDEYQQEEDDDETSDQKAKKKKITLQDIYDMQDLKKNLMTEEDMVIRRSDIPERYQELRAGLKNYGQLTPEDQLLEQNWISDKIAVDKNFDATYDISEFREAVGDAVRFISKENLEVSFIYAYRRNYISSRDKNGFILSEDDLWDIVFYDIEFHSIIYKRDYVKKFYEQLGIRDSLVDDYFNDESMTELNSLQDIYNYLEFRYAHEINDALLADSSSKTKKHLKNSSYEKFKSSSLYQAVKDVGITAEQIGENIGAETQIHPVVDHPNLKPSESISQILDAASADLQVFAKNHKLAWDTVQKYFAAEIGNNPKVRQKIRNDFYKYYIVDVVLTTKGRKEIQRSSPYEDIKYAINRTPGHFRSAPDVFLRMLEAESLHLMNIKIHMSSQEQYCEHLFQIALETTNTSEIAIEWNNFRRNAFYQALEKIFEDIAQEIKDELKKTSQKLVANSVRHRFMSKLDQAPFIPNPREPKIPRVLTITCGQGRFGLDAIIAVLLNRKGDFVKDFKIVQNPFDRDQPQAFEAVLDNIIQEAQPNVIGINGPNPKTQKLFKKIQEVIQKKQIVDNRGHNIPVIFVEDEIAIRYQSSERGAQEFPNKPTLVKYCIALARYIHSPLLEYTNLSEEELQSLLIHPHQSLLPRHIFKRALETSFVDIVNLVGVEVNKANDNPYYAKALQYIAGLGKRKAIDFLESLQRLNEPLLARQQLITHDILHKTIFMNSAGFLYISWNEKNQRYEDLEHDHLDSTRIHPEDYHLATKVAADALEYDPDAIREKEEQGAMSEFIELLRDDPDRRMKLESLNLEEYADELERSTGQRKLNNLNTIVLELLEGFEELRNDFHPLQGDEIFTSLTGETDKTFFKGSIIPVRVERFKHNDIICISNSQVECIVNAQRHLGVQLKRPASDIYEVGKTYPAKIIFIDYENISAEVSLLDHDVKHQYIPVDYSKDPTIWNLKQELEDVEEEKKISMAEARAKRTHRVINHPYYFPFNGKQAEDYLRSKERGEFIIRQSSRGDDHLAITWKLDKDLFQHVDILELDKENPLALGKTLIVDNNKYNDLDHVIVEYLQNKIKLLNEITSNEKFKKGTKKEVVKFIEDYSNVNPNRSVYYLSFNYEHPGWFYLMFKINAQSKLCTWNVKLTHNGFSLADYNYPTVIQLCNGFKTLLKSSSRARTQEASGSGYYGY</sequence>
<feature type="chain" id="PRO_0000238568" description="Transcription elongation factor SPT6">
    <location>
        <begin position="1"/>
        <end position="1432"/>
    </location>
</feature>
<feature type="domain" description="SH2" evidence="2">
    <location>
        <begin position="1232"/>
        <end position="1329"/>
    </location>
</feature>
<feature type="region of interest" description="Disordered" evidence="3">
    <location>
        <begin position="1"/>
        <end position="215"/>
    </location>
</feature>
<feature type="compositionally biased region" description="Basic and acidic residues" evidence="3">
    <location>
        <begin position="10"/>
        <end position="24"/>
    </location>
</feature>
<feature type="compositionally biased region" description="Acidic residues" evidence="3">
    <location>
        <begin position="25"/>
        <end position="51"/>
    </location>
</feature>
<feature type="compositionally biased region" description="Basic residues" evidence="3">
    <location>
        <begin position="73"/>
        <end position="84"/>
    </location>
</feature>
<feature type="compositionally biased region" description="Basic and acidic residues" evidence="3">
    <location>
        <begin position="85"/>
        <end position="95"/>
    </location>
</feature>
<feature type="compositionally biased region" description="Basic and acidic residues" evidence="3">
    <location>
        <begin position="140"/>
        <end position="150"/>
    </location>
</feature>
<feature type="compositionally biased region" description="Basic and acidic residues" evidence="3">
    <location>
        <begin position="160"/>
        <end position="177"/>
    </location>
</feature>
<feature type="compositionally biased region" description="Acidic residues" evidence="3">
    <location>
        <begin position="178"/>
        <end position="194"/>
    </location>
</feature>
<evidence type="ECO:0000250" key="1">
    <source>
        <dbReference type="UniProtKB" id="P23615"/>
    </source>
</evidence>
<evidence type="ECO:0000255" key="2">
    <source>
        <dbReference type="PROSITE-ProRule" id="PRU00191"/>
    </source>
</evidence>
<evidence type="ECO:0000256" key="3">
    <source>
        <dbReference type="SAM" id="MobiDB-lite"/>
    </source>
</evidence>
<evidence type="ECO:0000305" key="4"/>
<keyword id="KW-0158">Chromosome</keyword>
<keyword id="KW-0539">Nucleus</keyword>
<keyword id="KW-1185">Reference proteome</keyword>
<keyword id="KW-0727">SH2 domain</keyword>
<keyword id="KW-0804">Transcription</keyword>
<protein>
    <recommendedName>
        <fullName>Transcription elongation factor SPT6</fullName>
    </recommendedName>
    <alternativeName>
        <fullName>Chromatin elongation factor SPT6</fullName>
    </alternativeName>
</protein>